<accession>B1KIS8</accession>
<comment type="similarity">
    <text evidence="1">Belongs to the UPF0246 family.</text>
</comment>
<gene>
    <name type="ordered locus">Swoo_1284</name>
</gene>
<feature type="chain" id="PRO_1000131145" description="UPF0246 protein Swoo_1284">
    <location>
        <begin position="1"/>
        <end position="256"/>
    </location>
</feature>
<name>Y1284_SHEWM</name>
<dbReference type="EMBL" id="CP000961">
    <property type="protein sequence ID" value="ACA85576.1"/>
    <property type="molecule type" value="Genomic_DNA"/>
</dbReference>
<dbReference type="RefSeq" id="WP_012323922.1">
    <property type="nucleotide sequence ID" value="NC_010506.1"/>
</dbReference>
<dbReference type="SMR" id="B1KIS8"/>
<dbReference type="STRING" id="392500.Swoo_1284"/>
<dbReference type="KEGG" id="swd:Swoo_1284"/>
<dbReference type="eggNOG" id="COG3022">
    <property type="taxonomic scope" value="Bacteria"/>
</dbReference>
<dbReference type="HOGENOM" id="CLU_061989_0_0_6"/>
<dbReference type="Proteomes" id="UP000002168">
    <property type="component" value="Chromosome"/>
</dbReference>
<dbReference type="GO" id="GO:0005829">
    <property type="term" value="C:cytosol"/>
    <property type="evidence" value="ECO:0007669"/>
    <property type="project" value="TreeGrafter"/>
</dbReference>
<dbReference type="GO" id="GO:0033194">
    <property type="term" value="P:response to hydroperoxide"/>
    <property type="evidence" value="ECO:0007669"/>
    <property type="project" value="TreeGrafter"/>
</dbReference>
<dbReference type="HAMAP" id="MF_00652">
    <property type="entry name" value="UPF0246"/>
    <property type="match status" value="1"/>
</dbReference>
<dbReference type="InterPro" id="IPR005583">
    <property type="entry name" value="YaaA"/>
</dbReference>
<dbReference type="NCBIfam" id="NF002541">
    <property type="entry name" value="PRK02101.1-1"/>
    <property type="match status" value="1"/>
</dbReference>
<dbReference type="NCBIfam" id="NF002542">
    <property type="entry name" value="PRK02101.1-3"/>
    <property type="match status" value="1"/>
</dbReference>
<dbReference type="PANTHER" id="PTHR30283:SF4">
    <property type="entry name" value="PEROXIDE STRESS RESISTANCE PROTEIN YAAA"/>
    <property type="match status" value="1"/>
</dbReference>
<dbReference type="PANTHER" id="PTHR30283">
    <property type="entry name" value="PEROXIDE STRESS RESPONSE PROTEIN YAAA"/>
    <property type="match status" value="1"/>
</dbReference>
<dbReference type="Pfam" id="PF03883">
    <property type="entry name" value="H2O2_YaaD"/>
    <property type="match status" value="1"/>
</dbReference>
<reference key="1">
    <citation type="submission" date="2008-02" db="EMBL/GenBank/DDBJ databases">
        <title>Complete sequence of Shewanella woodyi ATCC 51908.</title>
        <authorList>
            <consortium name="US DOE Joint Genome Institute"/>
            <person name="Copeland A."/>
            <person name="Lucas S."/>
            <person name="Lapidus A."/>
            <person name="Glavina del Rio T."/>
            <person name="Dalin E."/>
            <person name="Tice H."/>
            <person name="Bruce D."/>
            <person name="Goodwin L."/>
            <person name="Pitluck S."/>
            <person name="Sims D."/>
            <person name="Brettin T."/>
            <person name="Detter J.C."/>
            <person name="Han C."/>
            <person name="Kuske C.R."/>
            <person name="Schmutz J."/>
            <person name="Larimer F."/>
            <person name="Land M."/>
            <person name="Hauser L."/>
            <person name="Kyrpides N."/>
            <person name="Lykidis A."/>
            <person name="Zhao J.-S."/>
            <person name="Richardson P."/>
        </authorList>
    </citation>
    <scope>NUCLEOTIDE SEQUENCE [LARGE SCALE GENOMIC DNA]</scope>
    <source>
        <strain>ATCC 51908 / MS32</strain>
    </source>
</reference>
<organism>
    <name type="scientific">Shewanella woodyi (strain ATCC 51908 / MS32)</name>
    <dbReference type="NCBI Taxonomy" id="392500"/>
    <lineage>
        <taxon>Bacteria</taxon>
        <taxon>Pseudomonadati</taxon>
        <taxon>Pseudomonadota</taxon>
        <taxon>Gammaproteobacteria</taxon>
        <taxon>Alteromonadales</taxon>
        <taxon>Shewanellaceae</taxon>
        <taxon>Shewanella</taxon>
    </lineage>
</organism>
<proteinExistence type="inferred from homology"/>
<sequence length="256" mass="28727">MLVLVSPAKTLDYDNPAATTEYTLPKLTQYSEQLIEECRKLTPADIASLMKVSDKIAGLNAARFESWSPRFTTGNAKQAVYAFRGDVYTGLDADSLSEDSLSRAQSQLRILSGLYGLLKPLDLMQPYRLEMGTRLANAKGTNLYQFWGDVITDEVNASLKEQGDELLVNLASNEYFKAVKPKLVNGTIITPVFKDRKNGQYKVISFFAKKARGMMVRYILDNKVSNLEELNKFDMAGYYYCEAESTAASPVFKREE</sequence>
<evidence type="ECO:0000255" key="1">
    <source>
        <dbReference type="HAMAP-Rule" id="MF_00652"/>
    </source>
</evidence>
<keyword id="KW-1185">Reference proteome</keyword>
<protein>
    <recommendedName>
        <fullName evidence="1">UPF0246 protein Swoo_1284</fullName>
    </recommendedName>
</protein>